<sequence length="1009" mass="115020">MYRRENINFSHPPQLKSPPPMSSPLDSNRSYRWTSLTAANNSKFADTPVKETPQKPDMSWWSPSRGDTWRLNAPRGRTLDLVAAFDQCSRQDQLDSPRYANLGRYRRNSEPMQDNEKEVVTTNFIDDSMIEDHEEYEEHDIELGTDFYDPHMIRHHRSSERFEQSLGTGQQIETIHISTRLVPQLKRVPNSDYANDGRGDMKEYGSISKKNETPILDGTPKRPSPLTTRNIHKVDINRMDHLMKTENTVAGFITLTPQVSKVTHKSDFSKHFGQEESVRASPMSRRNRRGTQTIVLPSFDSPASVRKSIPSPGLPTKTDIRSPSSLVKSIANDFEKADFGFHRKIDAAEEIAQLRKRADNSTFDENQNMVSDSAEDNVSNDFVPRISHLEMHPSVHMGISGYAKKNHVPYGESNEEVLYSLPIKKQSRNVDREGMDQTDEILLTPRAITMRQSLPFSDIPEERTCDKIDEMFDFVEVPTGDYDDKTTLERTVDGYAEVKSQKSPNKMIRNRLDLSTNTYQEIEFEKDTTPYMQEFEEDGTGYSASSSGPQFTRSPTLVTPHAGQSVAEYRVSDKEGCAKTEKVVVQKMSQPSALATSTPKGTFAWRNKNQSNAADDSFVSSISNFSAADKINDSKRQISKLIETIEKTRKHIQLAEISLIDAKRAQMVVQELASQRVLLICRERLKLQLDEVRRLQALSVVRHPPPPINRHFKSAMVISNIAIHLNKNFNCRGSFAFIVALKCRTEIEATGVVTLLAHYQTRMHVIHFGEHMHFSNLPVDFVIAMEVYMMRVPEYKAPEKTCAAVLAAKFRNLLVPNSAHRRARNNSVLSNRTVLSMPGYQAPDCDFRFCGKLTLDRDSAGDRQFYLDDVTYPLEGTVKLQSHCSSLPEAIDVEYRGFLYLFDERSPNGEAAWDRYWAMLHRGIIFFWKNPIDEKNQKVPLSQIDLTKCTNQSVEETRNGRDHEFHIELLIDQTPSLLEKRRVVLAAESSDHLASWLNAINDTLFVLRS</sequence>
<protein>
    <recommendedName>
        <fullName>Anillin-like protein 2</fullName>
    </recommendedName>
</protein>
<comment type="function">
    <text evidence="4">Required to maintain the structure of the rachis, the central cytoplasmic core of the syncytial adult gonad. Failure to maintain the rachis leads to premature dissociation of oocytes and thereby impedes oogenesis.</text>
</comment>
<comment type="tissue specificity">
    <text evidence="4">Localizes to the surface of the rachis.</text>
</comment>
<comment type="developmental stage">
    <text evidence="4">Enriched in adults.</text>
</comment>
<keyword id="KW-0175">Coiled coil</keyword>
<keyword id="KW-0217">Developmental protein</keyword>
<keyword id="KW-0221">Differentiation</keyword>
<keyword id="KW-0896">Oogenesis</keyword>
<keyword id="KW-1185">Reference proteome</keyword>
<name>ANI2_CAEEL</name>
<evidence type="ECO:0000255" key="1"/>
<evidence type="ECO:0000255" key="2">
    <source>
        <dbReference type="PROSITE-ProRule" id="PRU00145"/>
    </source>
</evidence>
<evidence type="ECO:0000256" key="3">
    <source>
        <dbReference type="SAM" id="MobiDB-lite"/>
    </source>
</evidence>
<evidence type="ECO:0000269" key="4">
    <source>
    </source>
</evidence>
<organism>
    <name type="scientific">Caenorhabditis elegans</name>
    <dbReference type="NCBI Taxonomy" id="6239"/>
    <lineage>
        <taxon>Eukaryota</taxon>
        <taxon>Metazoa</taxon>
        <taxon>Ecdysozoa</taxon>
        <taxon>Nematoda</taxon>
        <taxon>Chromadorea</taxon>
        <taxon>Rhabditida</taxon>
        <taxon>Rhabditina</taxon>
        <taxon>Rhabditomorpha</taxon>
        <taxon>Rhabditoidea</taxon>
        <taxon>Rhabditidae</taxon>
        <taxon>Peloderinae</taxon>
        <taxon>Caenorhabditis</taxon>
    </lineage>
</organism>
<reference key="1">
    <citation type="journal article" date="1998" name="Science">
        <title>Genome sequence of the nematode C. elegans: a platform for investigating biology.</title>
        <authorList>
            <consortium name="The C. elegans sequencing consortium"/>
        </authorList>
    </citation>
    <scope>NUCLEOTIDE SEQUENCE [LARGE SCALE GENOMIC DNA]</scope>
    <source>
        <strain>Bristol N2</strain>
    </source>
</reference>
<reference key="2">
    <citation type="journal article" date="2005" name="Development">
        <title>Distinct roles for two C. elegans anillins in the gonad and early embryo.</title>
        <authorList>
            <person name="Maddox A.S."/>
            <person name="Habermann B."/>
            <person name="Desai A."/>
            <person name="Oegema K."/>
        </authorList>
    </citation>
    <scope>FUNCTION</scope>
    <scope>TISSUE SPECIFICITY</scope>
    <scope>DEVELOPMENTAL STAGE</scope>
</reference>
<proteinExistence type="evidence at transcript level"/>
<accession>Q09994</accession>
<feature type="chain" id="PRO_0000227970" description="Anillin-like protein 2">
    <location>
        <begin position="1"/>
        <end position="1009"/>
    </location>
</feature>
<feature type="domain" description="PH" evidence="2">
    <location>
        <begin position="892"/>
        <end position="1005"/>
    </location>
</feature>
<feature type="region of interest" description="Disordered" evidence="3">
    <location>
        <begin position="1"/>
        <end position="29"/>
    </location>
</feature>
<feature type="region of interest" description="Disordered" evidence="3">
    <location>
        <begin position="272"/>
        <end position="295"/>
    </location>
</feature>
<feature type="region of interest" description="Disordered" evidence="3">
    <location>
        <begin position="539"/>
        <end position="558"/>
    </location>
</feature>
<feature type="coiled-coil region" evidence="1">
    <location>
        <begin position="626"/>
        <end position="657"/>
    </location>
</feature>
<feature type="compositionally biased region" description="Polar residues" evidence="3">
    <location>
        <begin position="542"/>
        <end position="557"/>
    </location>
</feature>
<dbReference type="EMBL" id="FO080748">
    <property type="protein sequence ID" value="CCD66397.1"/>
    <property type="molecule type" value="Genomic_DNA"/>
</dbReference>
<dbReference type="PIR" id="T16604">
    <property type="entry name" value="T16604"/>
</dbReference>
<dbReference type="RefSeq" id="NP_495282.1">
    <property type="nucleotide sequence ID" value="NM_062881.4"/>
</dbReference>
<dbReference type="SMR" id="Q09994"/>
<dbReference type="BioGRID" id="39395">
    <property type="interactions" value="2"/>
</dbReference>
<dbReference type="FunCoup" id="Q09994">
    <property type="interactions" value="562"/>
</dbReference>
<dbReference type="IntAct" id="Q09994">
    <property type="interactions" value="1"/>
</dbReference>
<dbReference type="STRING" id="6239.K10B2.5.1"/>
<dbReference type="iPTMnet" id="Q09994"/>
<dbReference type="PaxDb" id="6239-K10B2.5"/>
<dbReference type="PeptideAtlas" id="Q09994"/>
<dbReference type="EnsemblMetazoa" id="K10B2.5.1">
    <property type="protein sequence ID" value="K10B2.5.1"/>
    <property type="gene ID" value="WBGene00019608"/>
</dbReference>
<dbReference type="GeneID" id="174055"/>
<dbReference type="KEGG" id="cel:CELE_K10B2.5"/>
<dbReference type="UCSC" id="K10B2.5">
    <property type="organism name" value="c. elegans"/>
</dbReference>
<dbReference type="AGR" id="WB:WBGene00019608"/>
<dbReference type="CTD" id="174055"/>
<dbReference type="WormBase" id="K10B2.5">
    <property type="protein sequence ID" value="CE02012"/>
    <property type="gene ID" value="WBGene00019608"/>
    <property type="gene designation" value="ani-2"/>
</dbReference>
<dbReference type="eggNOG" id="KOG3640">
    <property type="taxonomic scope" value="Eukaryota"/>
</dbReference>
<dbReference type="GeneTree" id="ENSGT00390000008749"/>
<dbReference type="HOGENOM" id="CLU_301150_0_0_1"/>
<dbReference type="InParanoid" id="Q09994"/>
<dbReference type="OMA" id="EYEEHDI"/>
<dbReference type="OrthoDB" id="5915976at2759"/>
<dbReference type="PhylomeDB" id="Q09994"/>
<dbReference type="Reactome" id="R-CEL-8980692">
    <property type="pathway name" value="RHOA GTPase cycle"/>
</dbReference>
<dbReference type="Reactome" id="R-CEL-9013026">
    <property type="pathway name" value="RHOB GTPase cycle"/>
</dbReference>
<dbReference type="PRO" id="PR:Q09994"/>
<dbReference type="Proteomes" id="UP000001940">
    <property type="component" value="Chromosome II"/>
</dbReference>
<dbReference type="Bgee" id="WBGene00019608">
    <property type="expression patterns" value="Expressed in germ line (C elegans) and 4 other cell types or tissues"/>
</dbReference>
<dbReference type="GO" id="GO:0005826">
    <property type="term" value="C:actomyosin contractile ring"/>
    <property type="evidence" value="ECO:0000318"/>
    <property type="project" value="GO_Central"/>
</dbReference>
<dbReference type="GO" id="GO:0005737">
    <property type="term" value="C:cytoplasm"/>
    <property type="evidence" value="ECO:0000314"/>
    <property type="project" value="WormBase"/>
</dbReference>
<dbReference type="GO" id="GO:0000915">
    <property type="term" value="P:actomyosin contractile ring assembly"/>
    <property type="evidence" value="ECO:0000318"/>
    <property type="project" value="GO_Central"/>
</dbReference>
<dbReference type="GO" id="GO:0009792">
    <property type="term" value="P:embryo development ending in birth or egg hatching"/>
    <property type="evidence" value="ECO:0000315"/>
    <property type="project" value="WormBase"/>
</dbReference>
<dbReference type="GO" id="GO:0008406">
    <property type="term" value="P:gonad development"/>
    <property type="evidence" value="ECO:0000315"/>
    <property type="project" value="WormBase"/>
</dbReference>
<dbReference type="GO" id="GO:0000281">
    <property type="term" value="P:mitotic cytokinesis"/>
    <property type="evidence" value="ECO:0000318"/>
    <property type="project" value="GO_Central"/>
</dbReference>
<dbReference type="GO" id="GO:0048609">
    <property type="term" value="P:multicellular organismal reproductive process"/>
    <property type="evidence" value="ECO:0000315"/>
    <property type="project" value="WormBase"/>
</dbReference>
<dbReference type="GO" id="GO:0048477">
    <property type="term" value="P:oogenesis"/>
    <property type="evidence" value="ECO:0000315"/>
    <property type="project" value="WormBase"/>
</dbReference>
<dbReference type="GO" id="GO:0030728">
    <property type="term" value="P:ovulation"/>
    <property type="evidence" value="ECO:0000315"/>
    <property type="project" value="WormBase"/>
</dbReference>
<dbReference type="GO" id="GO:0031106">
    <property type="term" value="P:septin ring organization"/>
    <property type="evidence" value="ECO:0000318"/>
    <property type="project" value="GO_Central"/>
</dbReference>
<dbReference type="GO" id="GO:0006949">
    <property type="term" value="P:syncytium formation"/>
    <property type="evidence" value="ECO:0000315"/>
    <property type="project" value="WormBase"/>
</dbReference>
<dbReference type="CDD" id="cd01263">
    <property type="entry name" value="PH_anillin"/>
    <property type="match status" value="1"/>
</dbReference>
<dbReference type="FunFam" id="2.30.29.30:FF:000111">
    <property type="entry name" value="anillin isoform X1"/>
    <property type="match status" value="1"/>
</dbReference>
<dbReference type="Gene3D" id="2.30.29.30">
    <property type="entry name" value="Pleckstrin-homology domain (PH domain)/Phosphotyrosine-binding domain (PTB)"/>
    <property type="match status" value="1"/>
</dbReference>
<dbReference type="InterPro" id="IPR012966">
    <property type="entry name" value="AHD"/>
</dbReference>
<dbReference type="InterPro" id="IPR051364">
    <property type="entry name" value="Cytokinesis/Rho-signaling"/>
</dbReference>
<dbReference type="InterPro" id="IPR011993">
    <property type="entry name" value="PH-like_dom_sf"/>
</dbReference>
<dbReference type="InterPro" id="IPR037840">
    <property type="entry name" value="PH_Anillin"/>
</dbReference>
<dbReference type="InterPro" id="IPR001849">
    <property type="entry name" value="PH_domain"/>
</dbReference>
<dbReference type="PANTHER" id="PTHR21538:SF23">
    <property type="entry name" value="ANILLIN"/>
    <property type="match status" value="1"/>
</dbReference>
<dbReference type="PANTHER" id="PTHR21538">
    <property type="entry name" value="ANILLIN/RHOTEKIN RTKN"/>
    <property type="match status" value="1"/>
</dbReference>
<dbReference type="Pfam" id="PF08174">
    <property type="entry name" value="Anillin"/>
    <property type="match status" value="1"/>
</dbReference>
<dbReference type="Pfam" id="PF00169">
    <property type="entry name" value="PH"/>
    <property type="match status" value="1"/>
</dbReference>
<dbReference type="SMART" id="SM00233">
    <property type="entry name" value="PH"/>
    <property type="match status" value="1"/>
</dbReference>
<dbReference type="SUPFAM" id="SSF50729">
    <property type="entry name" value="PH domain-like"/>
    <property type="match status" value="1"/>
</dbReference>
<dbReference type="PROSITE" id="PS50003">
    <property type="entry name" value="PH_DOMAIN"/>
    <property type="match status" value="1"/>
</dbReference>
<gene>
    <name type="primary">ani-2</name>
    <name type="ORF">K10B2.5</name>
</gene>